<name>MEDII_MICMH</name>
<dbReference type="EC" id="2.6.1.106" evidence="4"/>
<dbReference type="EMBL" id="AF263245">
    <property type="protein sequence ID" value="AAG13910.1"/>
    <property type="molecule type" value="Genomic_DNA"/>
</dbReference>
<dbReference type="SMR" id="Q9F837"/>
<dbReference type="KEGG" id="ag:AAG13910"/>
<dbReference type="BioCyc" id="MetaCyc:MONOMER-17629"/>
<dbReference type="GO" id="GO:0030170">
    <property type="term" value="F:pyridoxal phosphate binding"/>
    <property type="evidence" value="ECO:0000250"/>
    <property type="project" value="UniProtKB"/>
</dbReference>
<dbReference type="GO" id="GO:0008483">
    <property type="term" value="F:transaminase activity"/>
    <property type="evidence" value="ECO:0000314"/>
    <property type="project" value="UniProtKB"/>
</dbReference>
<dbReference type="GO" id="GO:0033068">
    <property type="term" value="P:macrolide biosynthetic process"/>
    <property type="evidence" value="ECO:0000314"/>
    <property type="project" value="UniProtKB"/>
</dbReference>
<dbReference type="GO" id="GO:0000271">
    <property type="term" value="P:polysaccharide biosynthetic process"/>
    <property type="evidence" value="ECO:0007669"/>
    <property type="project" value="TreeGrafter"/>
</dbReference>
<dbReference type="CDD" id="cd00616">
    <property type="entry name" value="AHBA_syn"/>
    <property type="match status" value="1"/>
</dbReference>
<dbReference type="Gene3D" id="3.90.1150.10">
    <property type="entry name" value="Aspartate Aminotransferase, domain 1"/>
    <property type="match status" value="1"/>
</dbReference>
<dbReference type="Gene3D" id="3.40.640.10">
    <property type="entry name" value="Type I PLP-dependent aspartate aminotransferase-like (Major domain)"/>
    <property type="match status" value="1"/>
</dbReference>
<dbReference type="InterPro" id="IPR000653">
    <property type="entry name" value="DegT/StrS_aminotransferase"/>
</dbReference>
<dbReference type="InterPro" id="IPR015424">
    <property type="entry name" value="PyrdxlP-dep_Trfase"/>
</dbReference>
<dbReference type="InterPro" id="IPR015421">
    <property type="entry name" value="PyrdxlP-dep_Trfase_major"/>
</dbReference>
<dbReference type="InterPro" id="IPR015422">
    <property type="entry name" value="PyrdxlP-dep_Trfase_small"/>
</dbReference>
<dbReference type="PANTHER" id="PTHR30244:SF36">
    <property type="entry name" value="3-OXO-GLUCOSE-6-PHOSPHATE:GLUTAMATE AMINOTRANSFERASE"/>
    <property type="match status" value="1"/>
</dbReference>
<dbReference type="PANTHER" id="PTHR30244">
    <property type="entry name" value="TRANSAMINASE"/>
    <property type="match status" value="1"/>
</dbReference>
<dbReference type="Pfam" id="PF01041">
    <property type="entry name" value="DegT_DnrJ_EryC1"/>
    <property type="match status" value="1"/>
</dbReference>
<dbReference type="PIRSF" id="PIRSF000390">
    <property type="entry name" value="PLP_StrS"/>
    <property type="match status" value="1"/>
</dbReference>
<dbReference type="SUPFAM" id="SSF53383">
    <property type="entry name" value="PLP-dependent transferases"/>
    <property type="match status" value="1"/>
</dbReference>
<organism>
    <name type="scientific">Micromonospora megalomicea subsp. nigra</name>
    <dbReference type="NCBI Taxonomy" id="136926"/>
    <lineage>
        <taxon>Bacteria</taxon>
        <taxon>Bacillati</taxon>
        <taxon>Actinomycetota</taxon>
        <taxon>Actinomycetes</taxon>
        <taxon>Micromonosporales</taxon>
        <taxon>Micromonosporaceae</taxon>
        <taxon>Micromonospora</taxon>
    </lineage>
</organism>
<proteinExistence type="evidence at protein level"/>
<gene>
    <name evidence="5" type="primary">megDII</name>
</gene>
<sequence>MTTYVWSYLLEYERERADILDAVQKVFASGSLILGQSVENFETEYARYHGIAHCVGVDNGTNAVKLALESVGVGRDDEVVTVSNTAAPTVLAIDEIGARPVFVDVRDEDYLMDTDLVEAAVTPRTKAIVPVHLYGQCVDMTALRELADRRGLKLVEDCAQAHGARRDGRLAGTMSDAAAFSFYPTKVLGAYGDGGAVVTNDDETARALRRLRYYGMEEVYYVTRTPGHNSRLDEVQAEILRRKLTRLDAYVAGRRAVAQRYVDGLADLQDSHGLELPVVTDGNEHVFYVYVVRHPRRDEIIKRLRDGYDISLNISYPWPVHTMTGFAHLGVASGSLPVTERLAGEIFSLPMYPSLPHDLQDRVIEAVREVITGL</sequence>
<keyword id="KW-0045">Antibiotic biosynthesis</keyword>
<keyword id="KW-0663">Pyridoxal phosphate</keyword>
<keyword id="KW-0808">Transferase</keyword>
<evidence type="ECO:0000250" key="1">
    <source>
        <dbReference type="UniProtKB" id="Q9ZGH4"/>
    </source>
</evidence>
<evidence type="ECO:0000269" key="2">
    <source>
    </source>
</evidence>
<evidence type="ECO:0000269" key="3">
    <source>
    </source>
</evidence>
<evidence type="ECO:0000269" key="4">
    <source>
    </source>
</evidence>
<evidence type="ECO:0000303" key="5">
    <source>
    </source>
</evidence>
<evidence type="ECO:0000305" key="6"/>
<protein>
    <recommendedName>
        <fullName evidence="5">dTDP-3-amino-3,4,6-trideoxy-alpha-D-glucose transaminase</fullName>
        <ecNumber evidence="4">2.6.1.106</ecNumber>
    </recommendedName>
</protein>
<comment type="function">
    <text evidence="2 3 4">Involved in the biosynthesis of the amino sugar dTDP-L-megosamine which is found in the macrolide antibiotic and antiparasitic megalomicin A. Catalyzes the reversible transfer of the amino group from L-glutamate to the C-3 position of dTDP-3-keto-4,6-deoxyglucose to yield dTDP-3-amino-3,4,6-trideoxyglucose.</text>
</comment>
<comment type="catalytic activity">
    <reaction evidence="4">
        <text>dTDP-3-amino-3,4,6-trideoxy-alpha-D-glucose + 2-oxoglutarate = dTDP-3-dehydro-4,6-dideoxy-alpha-D-glucose + L-glutamate</text>
        <dbReference type="Rhea" id="RHEA:39907"/>
        <dbReference type="ChEBI" id="CHEBI:16810"/>
        <dbReference type="ChEBI" id="CHEBI:29985"/>
        <dbReference type="ChEBI" id="CHEBI:63262"/>
        <dbReference type="ChEBI" id="CHEBI:76280"/>
        <dbReference type="EC" id="2.6.1.106"/>
    </reaction>
</comment>
<comment type="cofactor">
    <cofactor evidence="1">
        <name>pyridoxal 5'-phosphate</name>
        <dbReference type="ChEBI" id="CHEBI:597326"/>
    </cofactor>
</comment>
<comment type="pathway">
    <text evidence="6">Antibiotic biosynthesis.</text>
</comment>
<comment type="similarity">
    <text evidence="6">Belongs to the degT/dnrJ/eryC1 family.</text>
</comment>
<reference key="1">
    <citation type="journal article" date="2000" name="Mol. Microbiol.">
        <title>Biosynthesis of the anti-parasitic agent megalomicin: transformation of erythromycin to megalomicin in Saccharopolyspora erythraea.</title>
        <authorList>
            <person name="Volchegursky Y."/>
            <person name="Hu Z."/>
            <person name="Katz L."/>
            <person name="McDaniel R."/>
        </authorList>
    </citation>
    <scope>NUCLEOTIDE SEQUENCE [GENOMIC DNA]</scope>
    <scope>FUNCTION</scope>
    <source>
        <strain>ATCC 27598 / DSM 802 / NBRC 14744 / NCIMB 12662 / NRRL 3275</strain>
    </source>
</reference>
<reference key="2">
    <citation type="journal article" date="2006" name="Microbiology">
        <title>In vivo characterization of the dTDP-D-desosamine pathway of the megalomicin gene cluster from Micromonospora megalomicea.</title>
        <authorList>
            <person name="Rodriguez E."/>
            <person name="Peiru S."/>
            <person name="Carney J.R."/>
            <person name="Gramajo H."/>
        </authorList>
    </citation>
    <scope>FUNCTION</scope>
    <source>
        <strain>ATCC 27598 / DSM 802 / NBRC 14744 / NCIMB 12662 / NRRL 3275</strain>
    </source>
</reference>
<reference key="3">
    <citation type="journal article" date="2010" name="Appl. Environ. Microbiol.">
        <title>TDP-L-megosamine biosynthesis pathway elucidation and megalomicin a production in Escherichia coli.</title>
        <authorList>
            <person name="Useglio M."/>
            <person name="Peiru S."/>
            <person name="Rodriguez E."/>
            <person name="Labadie G.R."/>
            <person name="Carney J.R."/>
            <person name="Gramajo H."/>
        </authorList>
    </citation>
    <scope>FUNCTION</scope>
    <scope>CATALYTIC ACTIVITY</scope>
    <source>
        <strain>ATCC 27598 / DSM 802 / NBRC 14744 / NCIMB 12662 / NRRL 3275</strain>
    </source>
</reference>
<feature type="chain" id="PRO_0000430833" description="dTDP-3-amino-3,4,6-trideoxy-alpha-D-glucose transaminase">
    <location>
        <begin position="1"/>
        <end position="374"/>
    </location>
</feature>
<feature type="binding site" evidence="1">
    <location>
        <position position="60"/>
    </location>
    <ligand>
        <name>pyridoxal 5'-phosphate</name>
        <dbReference type="ChEBI" id="CHEBI:597326"/>
    </ligand>
</feature>
<feature type="binding site" evidence="1">
    <location>
        <position position="160"/>
    </location>
    <ligand>
        <name>pyridoxal 5'-phosphate</name>
        <dbReference type="ChEBI" id="CHEBI:597326"/>
    </ligand>
</feature>
<feature type="binding site" evidence="1">
    <location>
        <begin position="181"/>
        <end position="186"/>
    </location>
    <ligand>
        <name>pyridoxal 5'-phosphate</name>
        <dbReference type="ChEBI" id="CHEBI:597326"/>
    </ligand>
</feature>
<feature type="binding site" evidence="1">
    <location>
        <position position="214"/>
    </location>
    <ligand>
        <name>pyridoxal 5'-phosphate</name>
        <dbReference type="ChEBI" id="CHEBI:597326"/>
    </ligand>
</feature>
<feature type="binding site" evidence="1">
    <location>
        <position position="221"/>
    </location>
    <ligand>
        <name>pyridoxal 5'-phosphate</name>
        <dbReference type="ChEBI" id="CHEBI:597326"/>
    </ligand>
</feature>
<feature type="binding site" evidence="1">
    <location>
        <begin position="229"/>
        <end position="231"/>
    </location>
    <ligand>
        <name>pyridoxal 5'-phosphate</name>
        <dbReference type="ChEBI" id="CHEBI:597326"/>
    </ligand>
</feature>
<feature type="binding site" evidence="1">
    <location>
        <position position="316"/>
    </location>
    <ligand>
        <name>pyridoxal 5'-phosphate</name>
        <dbReference type="ChEBI" id="CHEBI:597326"/>
    </ligand>
</feature>
<feature type="modified residue" description="N6-(pyridoxal phosphate)lysine" evidence="1">
    <location>
        <position position="186"/>
    </location>
</feature>
<accession>Q9F837</accession>